<gene>
    <name type="ordered locus">SMU_747c</name>
</gene>
<organism>
    <name type="scientific">Streptococcus mutans serotype c (strain ATCC 700610 / UA159)</name>
    <dbReference type="NCBI Taxonomy" id="210007"/>
    <lineage>
        <taxon>Bacteria</taxon>
        <taxon>Bacillati</taxon>
        <taxon>Bacillota</taxon>
        <taxon>Bacilli</taxon>
        <taxon>Lactobacillales</taxon>
        <taxon>Streptococcaceae</taxon>
        <taxon>Streptococcus</taxon>
    </lineage>
</organism>
<protein>
    <recommendedName>
        <fullName>Putative two-component membrane permease complex subunit SMU_747c</fullName>
    </recommendedName>
</protein>
<reference key="1">
    <citation type="journal article" date="2002" name="Proc. Natl. Acad. Sci. U.S.A.">
        <title>Genome sequence of Streptococcus mutans UA159, a cariogenic dental pathogen.</title>
        <authorList>
            <person name="Ajdic D.J."/>
            <person name="McShan W.M."/>
            <person name="McLaughlin R.E."/>
            <person name="Savic G."/>
            <person name="Chang J."/>
            <person name="Carson M.B."/>
            <person name="Primeaux C."/>
            <person name="Tian R."/>
            <person name="Kenton S."/>
            <person name="Jia H.G."/>
            <person name="Lin S.P."/>
            <person name="Qian Y."/>
            <person name="Li S."/>
            <person name="Zhu H."/>
            <person name="Najar F.Z."/>
            <person name="Lai H."/>
            <person name="White J."/>
            <person name="Roe B.A."/>
            <person name="Ferretti J.J."/>
        </authorList>
    </citation>
    <scope>NUCLEOTIDE SEQUENCE [LARGE SCALE GENOMIC DNA]</scope>
    <source>
        <strain>ATCC 700610 / UA159</strain>
    </source>
</reference>
<reference key="2">
    <citation type="journal article" date="2014" name="J. Bacteriol.">
        <title>SMU.746-SMU.747, a putative membrane permease complex, is involved in aciduricity, acidogenesis, and biofilm formation in Streptococcus mutans.</title>
        <authorList>
            <person name="Krol J.E."/>
            <person name="Biswas S."/>
            <person name="King C."/>
            <person name="Biswas I."/>
        </authorList>
    </citation>
    <scope>FUNCTION</scope>
    <scope>SUBUNIT</scope>
    <scope>DISRUPTION PHENOTYPE</scope>
    <source>
        <strain>ATCC 700610 / UA159</strain>
    </source>
</reference>
<proteinExistence type="evidence at protein level"/>
<comment type="function">
    <text evidence="2">Could be part of a two-component membrane permease system responsible for amino acid transport under low pH. Involved in acidogenesis, biofilm formation and low-pH survival.</text>
</comment>
<comment type="subunit">
    <text evidence="3">Interacts with SMU_746c.</text>
</comment>
<comment type="subcellular location">
    <subcellularLocation>
        <location evidence="3">Cell membrane</location>
        <topology evidence="3">Multi-pass membrane protein</topology>
    </subcellularLocation>
</comment>
<comment type="disruption phenotype">
    <text evidence="2">SMU_746c-SMU_747c deletion affects biofilm formation in a medium- and pH-dependent manner. Mutants show a reduced ability to grow in acidified medium, but they survive both short-term or long-term acid stress. Mutants have lower glycolytic activity. Deletion does not affect membrane proton permeability.</text>
</comment>
<comment type="similarity">
    <text evidence="3">Belongs to the UPF0718 family.</text>
</comment>
<name>TCMPB_STRMU</name>
<feature type="chain" id="PRO_0000426729" description="Putative two-component membrane permease complex subunit SMU_747c">
    <location>
        <begin position="1"/>
        <end position="301"/>
    </location>
</feature>
<feature type="transmembrane region" description="Helical" evidence="1">
    <location>
        <begin position="15"/>
        <end position="35"/>
    </location>
</feature>
<feature type="transmembrane region" description="Helical" evidence="1">
    <location>
        <begin position="60"/>
        <end position="80"/>
    </location>
</feature>
<feature type="transmembrane region" description="Helical" evidence="1">
    <location>
        <begin position="97"/>
        <end position="117"/>
    </location>
</feature>
<feature type="transmembrane region" description="Helical" evidence="1">
    <location>
        <begin position="124"/>
        <end position="144"/>
    </location>
</feature>
<feature type="transmembrane region" description="Helical" evidence="1">
    <location>
        <begin position="188"/>
        <end position="208"/>
    </location>
</feature>
<feature type="transmembrane region" description="Helical" evidence="1">
    <location>
        <begin position="211"/>
        <end position="231"/>
    </location>
</feature>
<feature type="transmembrane region" description="Helical" evidence="1">
    <location>
        <begin position="238"/>
        <end position="258"/>
    </location>
</feature>
<feature type="transmembrane region" description="Helical" evidence="1">
    <location>
        <begin position="278"/>
        <end position="298"/>
    </location>
</feature>
<dbReference type="EMBL" id="AE014133">
    <property type="protein sequence ID" value="AAN58471.1"/>
    <property type="molecule type" value="Genomic_DNA"/>
</dbReference>
<dbReference type="RefSeq" id="NP_721165.1">
    <property type="nucleotide sequence ID" value="NC_004350.2"/>
</dbReference>
<dbReference type="RefSeq" id="WP_002263631.1">
    <property type="nucleotide sequence ID" value="NC_004350.2"/>
</dbReference>
<dbReference type="STRING" id="210007.SMU_747c"/>
<dbReference type="DNASU" id="1029471"/>
<dbReference type="KEGG" id="smu:SMU_747c"/>
<dbReference type="PATRIC" id="fig|210007.7.peg.661"/>
<dbReference type="eggNOG" id="COG0701">
    <property type="taxonomic scope" value="Bacteria"/>
</dbReference>
<dbReference type="HOGENOM" id="CLU_039914_2_0_9"/>
<dbReference type="OrthoDB" id="9810876at2"/>
<dbReference type="PhylomeDB" id="Q8DUY3"/>
<dbReference type="Proteomes" id="UP000002512">
    <property type="component" value="Chromosome"/>
</dbReference>
<dbReference type="GO" id="GO:0005886">
    <property type="term" value="C:plasma membrane"/>
    <property type="evidence" value="ECO:0007669"/>
    <property type="project" value="UniProtKB-SubCell"/>
</dbReference>
<dbReference type="GO" id="GO:0006865">
    <property type="term" value="P:amino acid transport"/>
    <property type="evidence" value="ECO:0007669"/>
    <property type="project" value="UniProtKB-KW"/>
</dbReference>
<dbReference type="InterPro" id="IPR005524">
    <property type="entry name" value="DUF318"/>
</dbReference>
<dbReference type="InterPro" id="IPR052923">
    <property type="entry name" value="UPF0718"/>
</dbReference>
<dbReference type="PANTHER" id="PTHR34184">
    <property type="entry name" value="UPF0718 PROTEIN YCGR"/>
    <property type="match status" value="1"/>
</dbReference>
<dbReference type="PANTHER" id="PTHR34184:SF4">
    <property type="entry name" value="UPF0718 PROTEIN YCGR"/>
    <property type="match status" value="1"/>
</dbReference>
<dbReference type="Pfam" id="PF03773">
    <property type="entry name" value="ArsP_1"/>
    <property type="match status" value="1"/>
</dbReference>
<evidence type="ECO:0000255" key="1"/>
<evidence type="ECO:0000269" key="2">
    <source>
    </source>
</evidence>
<evidence type="ECO:0000305" key="3"/>
<keyword id="KW-0029">Amino-acid transport</keyword>
<keyword id="KW-1003">Cell membrane</keyword>
<keyword id="KW-0472">Membrane</keyword>
<keyword id="KW-1185">Reference proteome</keyword>
<keyword id="KW-0812">Transmembrane</keyword>
<keyword id="KW-1133">Transmembrane helix</keyword>
<keyword id="KW-0813">Transport</keyword>
<accession>Q8DUY3</accession>
<sequence length="301" mass="33274">MAIFNHLPSSVLQCLAIFLSIIIEALPFILLGAILSGFIEVYLTPDIVQKYLPKNKIGRILFGTFVGFIFPSCECGIVPIVNRFLEKKVPSYTAIPFLATAPIINPIVLFATFSAFGNSWRFVFLRLFGAIIVAISLGILLGFIVDEHIIKESAKPCHFHDYSHKKAYQKIFYALAHAVDELFDTGRYLIFGSFVAASMQIYVPTRILTSIGHNPLTAILIMMLLAFILSLCSEADAFIGTSLLATFGVAPVVAFLLIGPMVDIKNLMMMKNAFKTKFILQFVGTSSLIIIIYCLIVGVMQ</sequence>